<reference key="1">
    <citation type="journal article" date="1998" name="Science">
        <title>Genome sequence of the nematode C. elegans: a platform for investigating biology.</title>
        <authorList>
            <consortium name="The C. elegans sequencing consortium"/>
        </authorList>
    </citation>
    <scope>NUCLEOTIDE SEQUENCE [LARGE SCALE GENOMIC DNA]</scope>
    <source>
        <strain>Bristol N2</strain>
    </source>
</reference>
<name>SRE12_CAEEL</name>
<protein>
    <recommendedName>
        <fullName>Serpentine receptor class epsilon-12</fullName>
        <shortName>Protein sre-12</shortName>
    </recommendedName>
</protein>
<organism>
    <name type="scientific">Caenorhabditis elegans</name>
    <dbReference type="NCBI Taxonomy" id="6239"/>
    <lineage>
        <taxon>Eukaryota</taxon>
        <taxon>Metazoa</taxon>
        <taxon>Ecdysozoa</taxon>
        <taxon>Nematoda</taxon>
        <taxon>Chromadorea</taxon>
        <taxon>Rhabditida</taxon>
        <taxon>Rhabditina</taxon>
        <taxon>Rhabditomorpha</taxon>
        <taxon>Rhabditoidea</taxon>
        <taxon>Rhabditidae</taxon>
        <taxon>Peloderinae</taxon>
        <taxon>Caenorhabditis</taxon>
    </lineage>
</organism>
<accession>O61898</accession>
<evidence type="ECO:0000255" key="1"/>
<evidence type="ECO:0000305" key="2"/>
<sequence length="341" mass="39706">MLLLHYFNLSHFQVNDHFYPHMRNFLYGETAFYVADTINMMFYIWVLFSAQQFHFNFTLVSGTQYVIHFFDNLAIIVMRLHSLLGFTDDFDIGSNVVFNGAMTFSVYCIVAAMCSLPFSILERCFATRYLKDYEANSRAYISYALVFLLNFIGIIGAILLQNKNNTIFVVAFLMILNLFALLTNQFLRTWNLKKYEECHSNVSIRFQRGGKYSLAKRFQISENIKSLHMLNFIILYMGFMNVCLVISVLFSSFDISPERQAICSLALDASIFFYSFAIPQIMTCFCHKWKVQTNTFRIRIGCLRTGKVNLEPLRDTFGGDMRGSVSMNRYFDQLQDSWENA</sequence>
<keyword id="KW-0472">Membrane</keyword>
<keyword id="KW-1185">Reference proteome</keyword>
<keyword id="KW-0812">Transmembrane</keyword>
<keyword id="KW-1133">Transmembrane helix</keyword>
<comment type="subcellular location">
    <subcellularLocation>
        <location evidence="2">Membrane</location>
        <topology evidence="2">Multi-pass membrane protein</topology>
    </subcellularLocation>
</comment>
<comment type="similarity">
    <text evidence="2">Belongs to the nematode receptor-like protein sre family.</text>
</comment>
<dbReference type="EMBL" id="FO080767">
    <property type="protein sequence ID" value="CCD66562.1"/>
    <property type="molecule type" value="Genomic_DNA"/>
</dbReference>
<dbReference type="PIR" id="T33221">
    <property type="entry name" value="T33221"/>
</dbReference>
<dbReference type="RefSeq" id="NP_504764.1">
    <property type="nucleotide sequence ID" value="NM_072363.2"/>
</dbReference>
<dbReference type="FunCoup" id="O61898">
    <property type="interactions" value="69"/>
</dbReference>
<dbReference type="STRING" id="6239.T07H8.7.1"/>
<dbReference type="PaxDb" id="6239-T07H8.7"/>
<dbReference type="EnsemblMetazoa" id="T07H8.7.1">
    <property type="protein sequence ID" value="T07H8.7.1"/>
    <property type="gene ID" value="WBGene00020333"/>
</dbReference>
<dbReference type="GeneID" id="188261"/>
<dbReference type="KEGG" id="cel:CELE_T07H8.7"/>
<dbReference type="UCSC" id="T07H8.7">
    <property type="organism name" value="c. elegans"/>
</dbReference>
<dbReference type="AGR" id="WB:WBGene00020333"/>
<dbReference type="CTD" id="188261"/>
<dbReference type="WormBase" id="T07H8.7">
    <property type="protein sequence ID" value="CE18228"/>
    <property type="gene ID" value="WBGene00020333"/>
    <property type="gene designation" value="sre-12"/>
</dbReference>
<dbReference type="eggNOG" id="ENOG502RVP7">
    <property type="taxonomic scope" value="Eukaryota"/>
</dbReference>
<dbReference type="GeneTree" id="ENSGT00970000196776"/>
<dbReference type="HOGENOM" id="CLU_043866_1_0_1"/>
<dbReference type="InParanoid" id="O61898"/>
<dbReference type="OMA" id="SAKQFHY"/>
<dbReference type="OrthoDB" id="5823221at2759"/>
<dbReference type="PhylomeDB" id="O61898"/>
<dbReference type="PRO" id="PR:O61898"/>
<dbReference type="Proteomes" id="UP000001940">
    <property type="component" value="Chromosome V"/>
</dbReference>
<dbReference type="GO" id="GO:0016020">
    <property type="term" value="C:membrane"/>
    <property type="evidence" value="ECO:0007669"/>
    <property type="project" value="UniProtKB-SubCell"/>
</dbReference>
<dbReference type="GO" id="GO:0007606">
    <property type="term" value="P:sensory perception of chemical stimulus"/>
    <property type="evidence" value="ECO:0007669"/>
    <property type="project" value="InterPro"/>
</dbReference>
<dbReference type="InterPro" id="IPR004151">
    <property type="entry name" value="7TM_GPCR_serpentine_rcpt_Sre"/>
</dbReference>
<dbReference type="InterPro" id="IPR052854">
    <property type="entry name" value="Serpentine_rcpt_epsilon"/>
</dbReference>
<dbReference type="PANTHER" id="PTHR47518">
    <property type="entry name" value="SERPENTINE RECEPTOR CLASS EPSILON-13-RELATED"/>
    <property type="match status" value="1"/>
</dbReference>
<dbReference type="PANTHER" id="PTHR47518:SF11">
    <property type="entry name" value="SERPENTINE RECEPTOR, CLASS E (EPSILON)-RELATED"/>
    <property type="match status" value="1"/>
</dbReference>
<dbReference type="Pfam" id="PF03125">
    <property type="entry name" value="Sre"/>
    <property type="match status" value="1"/>
</dbReference>
<proteinExistence type="inferred from homology"/>
<feature type="chain" id="PRO_0000104538" description="Serpentine receptor class epsilon-12">
    <location>
        <begin position="1"/>
        <end position="341"/>
    </location>
</feature>
<feature type="transmembrane region" description="Helical" evidence="1">
    <location>
        <begin position="30"/>
        <end position="50"/>
    </location>
</feature>
<feature type="transmembrane region" description="Helical" evidence="1">
    <location>
        <begin position="57"/>
        <end position="77"/>
    </location>
</feature>
<feature type="transmembrane region" description="Helical" evidence="1">
    <location>
        <begin position="101"/>
        <end position="121"/>
    </location>
</feature>
<feature type="transmembrane region" description="Helical" evidence="1">
    <location>
        <begin position="140"/>
        <end position="160"/>
    </location>
</feature>
<feature type="transmembrane region" description="Helical" evidence="1">
    <location>
        <begin position="167"/>
        <end position="187"/>
    </location>
</feature>
<feature type="transmembrane region" description="Helical" evidence="1">
    <location>
        <begin position="230"/>
        <end position="250"/>
    </location>
</feature>
<feature type="transmembrane region" description="Helical" evidence="1">
    <location>
        <begin position="262"/>
        <end position="282"/>
    </location>
</feature>
<gene>
    <name type="primary">sre-12</name>
    <name type="ORF">T07H8.7</name>
</gene>